<dbReference type="EC" id="4.99.1.9" evidence="1"/>
<dbReference type="EMBL" id="AL596171">
    <property type="protein sequence ID" value="CAC97542.1"/>
    <property type="molecule type" value="Genomic_DNA"/>
</dbReference>
<dbReference type="PIR" id="AF1721">
    <property type="entry name" value="AF1721"/>
</dbReference>
<dbReference type="RefSeq" id="WP_010991124.1">
    <property type="nucleotide sequence ID" value="NC_003212.1"/>
</dbReference>
<dbReference type="SMR" id="Q929G2"/>
<dbReference type="STRING" id="272626.gene:17566676"/>
<dbReference type="KEGG" id="lin:hemH"/>
<dbReference type="eggNOG" id="COG0276">
    <property type="taxonomic scope" value="Bacteria"/>
</dbReference>
<dbReference type="HOGENOM" id="CLU_018884_2_1_9"/>
<dbReference type="OrthoDB" id="9776380at2"/>
<dbReference type="UniPathway" id="UPA00252"/>
<dbReference type="Proteomes" id="UP000002513">
    <property type="component" value="Chromosome"/>
</dbReference>
<dbReference type="GO" id="GO:0005737">
    <property type="term" value="C:cytoplasm"/>
    <property type="evidence" value="ECO:0007669"/>
    <property type="project" value="UniProtKB-SubCell"/>
</dbReference>
<dbReference type="GO" id="GO:0004325">
    <property type="term" value="F:ferrochelatase activity"/>
    <property type="evidence" value="ECO:0007669"/>
    <property type="project" value="UniProtKB-UniRule"/>
</dbReference>
<dbReference type="GO" id="GO:0046872">
    <property type="term" value="F:metal ion binding"/>
    <property type="evidence" value="ECO:0007669"/>
    <property type="project" value="UniProtKB-KW"/>
</dbReference>
<dbReference type="GO" id="GO:0006783">
    <property type="term" value="P:heme biosynthetic process"/>
    <property type="evidence" value="ECO:0007669"/>
    <property type="project" value="UniProtKB-UniRule"/>
</dbReference>
<dbReference type="CDD" id="cd00419">
    <property type="entry name" value="Ferrochelatase_C"/>
    <property type="match status" value="1"/>
</dbReference>
<dbReference type="CDD" id="cd03411">
    <property type="entry name" value="Ferrochelatase_N"/>
    <property type="match status" value="1"/>
</dbReference>
<dbReference type="FunFam" id="3.40.50.1400:FF:000009">
    <property type="entry name" value="Ferrochelatase"/>
    <property type="match status" value="1"/>
</dbReference>
<dbReference type="Gene3D" id="3.40.50.1400">
    <property type="match status" value="2"/>
</dbReference>
<dbReference type="HAMAP" id="MF_00323">
    <property type="entry name" value="Ferrochelatase"/>
    <property type="match status" value="1"/>
</dbReference>
<dbReference type="InterPro" id="IPR001015">
    <property type="entry name" value="Ferrochelatase"/>
</dbReference>
<dbReference type="InterPro" id="IPR019772">
    <property type="entry name" value="Ferrochelatase_AS"/>
</dbReference>
<dbReference type="InterPro" id="IPR033644">
    <property type="entry name" value="Ferrochelatase_C"/>
</dbReference>
<dbReference type="InterPro" id="IPR033659">
    <property type="entry name" value="Ferrochelatase_N"/>
</dbReference>
<dbReference type="NCBIfam" id="TIGR00109">
    <property type="entry name" value="hemH"/>
    <property type="match status" value="1"/>
</dbReference>
<dbReference type="NCBIfam" id="NF009095">
    <property type="entry name" value="PRK12435.1"/>
    <property type="match status" value="1"/>
</dbReference>
<dbReference type="PANTHER" id="PTHR11108">
    <property type="entry name" value="FERROCHELATASE"/>
    <property type="match status" value="1"/>
</dbReference>
<dbReference type="PANTHER" id="PTHR11108:SF1">
    <property type="entry name" value="FERROCHELATASE, MITOCHONDRIAL"/>
    <property type="match status" value="1"/>
</dbReference>
<dbReference type="Pfam" id="PF00762">
    <property type="entry name" value="Ferrochelatase"/>
    <property type="match status" value="1"/>
</dbReference>
<dbReference type="SUPFAM" id="SSF53800">
    <property type="entry name" value="Chelatase"/>
    <property type="match status" value="1"/>
</dbReference>
<dbReference type="PROSITE" id="PS00534">
    <property type="entry name" value="FERROCHELATASE"/>
    <property type="match status" value="1"/>
</dbReference>
<gene>
    <name evidence="1" type="primary">cpfC</name>
    <name type="ordered locus">lin2314</name>
</gene>
<sequence length="309" mass="35205">MTKKVGLLVMAYGTPYKDEDIERYYTDIRHGHKPSEEMIADLRGRYHAIGGLSPLAKITEAQAYGLEKALNDAQDEVEFKAYIGLKHIEPFIEDAVEAMHKDGIEEAISIVLAPHYSSFSVEAYNKRAKDAADKLGGIHIQAINDWYKQPKFIQMWADRINETAKQIPAEELIDTVLIVSAHSLPEKIKQHNDPYPDQLQETADLIFDKVAVPHYALGWQSEGKTGEPWLGPDVQDLTRELYGREKYKHFIYTPVGFVAEHLEVLYDNDYECKVVTDEVGAAYHRPPMPNADPEFLEVLRTVVWDAYTK</sequence>
<proteinExistence type="inferred from homology"/>
<keyword id="KW-0963">Cytoplasm</keyword>
<keyword id="KW-0350">Heme biosynthesis</keyword>
<keyword id="KW-0408">Iron</keyword>
<keyword id="KW-0456">Lyase</keyword>
<keyword id="KW-0479">Metal-binding</keyword>
<keyword id="KW-0627">Porphyrin biosynthesis</keyword>
<accession>Q929G2</accession>
<organism>
    <name type="scientific">Listeria innocua serovar 6a (strain ATCC BAA-680 / CLIP 11262)</name>
    <dbReference type="NCBI Taxonomy" id="272626"/>
    <lineage>
        <taxon>Bacteria</taxon>
        <taxon>Bacillati</taxon>
        <taxon>Bacillota</taxon>
        <taxon>Bacilli</taxon>
        <taxon>Bacillales</taxon>
        <taxon>Listeriaceae</taxon>
        <taxon>Listeria</taxon>
    </lineage>
</organism>
<comment type="function">
    <text evidence="1">Involved in coproporphyrin-dependent heme b biosynthesis. Catalyzes the insertion of ferrous iron into coproporphyrin III to form Fe-coproporphyrin III.</text>
</comment>
<comment type="catalytic activity">
    <reaction evidence="1">
        <text>Fe-coproporphyrin III + 2 H(+) = coproporphyrin III + Fe(2+)</text>
        <dbReference type="Rhea" id="RHEA:49572"/>
        <dbReference type="ChEBI" id="CHEBI:15378"/>
        <dbReference type="ChEBI" id="CHEBI:29033"/>
        <dbReference type="ChEBI" id="CHEBI:68438"/>
        <dbReference type="ChEBI" id="CHEBI:131725"/>
        <dbReference type="EC" id="4.99.1.9"/>
    </reaction>
    <physiologicalReaction direction="right-to-left" evidence="1">
        <dbReference type="Rhea" id="RHEA:49574"/>
    </physiologicalReaction>
</comment>
<comment type="pathway">
    <text evidence="1">Porphyrin-containing compound metabolism; protoheme biosynthesis.</text>
</comment>
<comment type="subcellular location">
    <subcellularLocation>
        <location evidence="1">Cytoplasm</location>
    </subcellularLocation>
</comment>
<comment type="similarity">
    <text evidence="1">Belongs to the ferrochelatase family.</text>
</comment>
<protein>
    <recommendedName>
        <fullName evidence="1">Coproporphyrin III ferrochelatase</fullName>
        <ecNumber evidence="1">4.99.1.9</ecNumber>
    </recommendedName>
</protein>
<feature type="chain" id="PRO_0000175159" description="Coproporphyrin III ferrochelatase">
    <location>
        <begin position="1"/>
        <end position="309"/>
    </location>
</feature>
<feature type="binding site" description="axial binding residue" evidence="1">
    <location>
        <position position="12"/>
    </location>
    <ligand>
        <name>Fe-coproporphyrin III</name>
        <dbReference type="ChEBI" id="CHEBI:68438"/>
    </ligand>
    <ligandPart>
        <name>Fe</name>
        <dbReference type="ChEBI" id="CHEBI:18248"/>
    </ligandPart>
</feature>
<feature type="binding site" evidence="1">
    <location>
        <position position="29"/>
    </location>
    <ligand>
        <name>Fe-coproporphyrin III</name>
        <dbReference type="ChEBI" id="CHEBI:68438"/>
    </ligand>
</feature>
<feature type="binding site" evidence="1">
    <location>
        <begin position="45"/>
        <end position="46"/>
    </location>
    <ligand>
        <name>Fe-coproporphyrin III</name>
        <dbReference type="ChEBI" id="CHEBI:68438"/>
    </ligand>
</feature>
<feature type="binding site" evidence="1">
    <location>
        <position position="53"/>
    </location>
    <ligand>
        <name>Fe-coproporphyrin III</name>
        <dbReference type="ChEBI" id="CHEBI:68438"/>
    </ligand>
</feature>
<feature type="binding site" evidence="1">
    <location>
        <position position="124"/>
    </location>
    <ligand>
        <name>Fe-coproporphyrin III</name>
        <dbReference type="ChEBI" id="CHEBI:68438"/>
    </ligand>
</feature>
<feature type="binding site" evidence="1">
    <location>
        <position position="182"/>
    </location>
    <ligand>
        <name>Fe(2+)</name>
        <dbReference type="ChEBI" id="CHEBI:29033"/>
    </ligand>
</feature>
<feature type="binding site" evidence="1">
    <location>
        <position position="263"/>
    </location>
    <ligand>
        <name>Fe(2+)</name>
        <dbReference type="ChEBI" id="CHEBI:29033"/>
    </ligand>
</feature>
<evidence type="ECO:0000255" key="1">
    <source>
        <dbReference type="HAMAP-Rule" id="MF_00323"/>
    </source>
</evidence>
<name>CPFC_LISIN</name>
<reference key="1">
    <citation type="journal article" date="2001" name="Science">
        <title>Comparative genomics of Listeria species.</title>
        <authorList>
            <person name="Glaser P."/>
            <person name="Frangeul L."/>
            <person name="Buchrieser C."/>
            <person name="Rusniok C."/>
            <person name="Amend A."/>
            <person name="Baquero F."/>
            <person name="Berche P."/>
            <person name="Bloecker H."/>
            <person name="Brandt P."/>
            <person name="Chakraborty T."/>
            <person name="Charbit A."/>
            <person name="Chetouani F."/>
            <person name="Couve E."/>
            <person name="de Daruvar A."/>
            <person name="Dehoux P."/>
            <person name="Domann E."/>
            <person name="Dominguez-Bernal G."/>
            <person name="Duchaud E."/>
            <person name="Durant L."/>
            <person name="Dussurget O."/>
            <person name="Entian K.-D."/>
            <person name="Fsihi H."/>
            <person name="Garcia-del Portillo F."/>
            <person name="Garrido P."/>
            <person name="Gautier L."/>
            <person name="Goebel W."/>
            <person name="Gomez-Lopez N."/>
            <person name="Hain T."/>
            <person name="Hauf J."/>
            <person name="Jackson D."/>
            <person name="Jones L.-M."/>
            <person name="Kaerst U."/>
            <person name="Kreft J."/>
            <person name="Kuhn M."/>
            <person name="Kunst F."/>
            <person name="Kurapkat G."/>
            <person name="Madueno E."/>
            <person name="Maitournam A."/>
            <person name="Mata Vicente J."/>
            <person name="Ng E."/>
            <person name="Nedjari H."/>
            <person name="Nordsiek G."/>
            <person name="Novella S."/>
            <person name="de Pablos B."/>
            <person name="Perez-Diaz J.-C."/>
            <person name="Purcell R."/>
            <person name="Remmel B."/>
            <person name="Rose M."/>
            <person name="Schlueter T."/>
            <person name="Simoes N."/>
            <person name="Tierrez A."/>
            <person name="Vazquez-Boland J.-A."/>
            <person name="Voss H."/>
            <person name="Wehland J."/>
            <person name="Cossart P."/>
        </authorList>
    </citation>
    <scope>NUCLEOTIDE SEQUENCE [LARGE SCALE GENOMIC DNA]</scope>
    <source>
        <strain>ATCC BAA-680 / CLIP 11262</strain>
    </source>
</reference>